<reference key="1">
    <citation type="journal article" date="2002" name="Proc. Natl. Acad. Sci. U.S.A.">
        <title>The Brucella suis genome reveals fundamental similarities between animal and plant pathogens and symbionts.</title>
        <authorList>
            <person name="Paulsen I.T."/>
            <person name="Seshadri R."/>
            <person name="Nelson K.E."/>
            <person name="Eisen J.A."/>
            <person name="Heidelberg J.F."/>
            <person name="Read T.D."/>
            <person name="Dodson R.J."/>
            <person name="Umayam L.A."/>
            <person name="Brinkac L.M."/>
            <person name="Beanan M.J."/>
            <person name="Daugherty S.C."/>
            <person name="DeBoy R.T."/>
            <person name="Durkin A.S."/>
            <person name="Kolonay J.F."/>
            <person name="Madupu R."/>
            <person name="Nelson W.C."/>
            <person name="Ayodeji B."/>
            <person name="Kraul M."/>
            <person name="Shetty J."/>
            <person name="Malek J.A."/>
            <person name="Van Aken S.E."/>
            <person name="Riedmuller S."/>
            <person name="Tettelin H."/>
            <person name="Gill S.R."/>
            <person name="White O."/>
            <person name="Salzberg S.L."/>
            <person name="Hoover D.L."/>
            <person name="Lindler L.E."/>
            <person name="Halling S.M."/>
            <person name="Boyle S.M."/>
            <person name="Fraser C.M."/>
        </authorList>
    </citation>
    <scope>NUCLEOTIDE SEQUENCE [LARGE SCALE GENOMIC DNA]</scope>
    <source>
        <strain>1330</strain>
    </source>
</reference>
<reference key="2">
    <citation type="journal article" date="2011" name="J. Bacteriol.">
        <title>Revised genome sequence of Brucella suis 1330.</title>
        <authorList>
            <person name="Tae H."/>
            <person name="Shallom S."/>
            <person name="Settlage R."/>
            <person name="Preston D."/>
            <person name="Adams L.G."/>
            <person name="Garner H.R."/>
        </authorList>
    </citation>
    <scope>NUCLEOTIDE SEQUENCE [LARGE SCALE GENOMIC DNA]</scope>
    <source>
        <strain>1330</strain>
    </source>
</reference>
<feature type="chain" id="PRO_0000192245" description="Ribosomal protein L11 methyltransferase">
    <location>
        <begin position="1"/>
        <end position="285"/>
    </location>
</feature>
<feature type="binding site" evidence="1">
    <location>
        <position position="131"/>
    </location>
    <ligand>
        <name>S-adenosyl-L-methionine</name>
        <dbReference type="ChEBI" id="CHEBI:59789"/>
    </ligand>
</feature>
<feature type="binding site" evidence="1">
    <location>
        <position position="154"/>
    </location>
    <ligand>
        <name>S-adenosyl-L-methionine</name>
        <dbReference type="ChEBI" id="CHEBI:59789"/>
    </ligand>
</feature>
<feature type="binding site" evidence="1">
    <location>
        <position position="176"/>
    </location>
    <ligand>
        <name>S-adenosyl-L-methionine</name>
        <dbReference type="ChEBI" id="CHEBI:59789"/>
    </ligand>
</feature>
<feature type="binding site" evidence="1">
    <location>
        <position position="223"/>
    </location>
    <ligand>
        <name>S-adenosyl-L-methionine</name>
        <dbReference type="ChEBI" id="CHEBI:59789"/>
    </ligand>
</feature>
<comment type="function">
    <text evidence="1">Methylates ribosomal protein L11.</text>
</comment>
<comment type="catalytic activity">
    <reaction evidence="1">
        <text>L-lysyl-[protein] + 3 S-adenosyl-L-methionine = N(6),N(6),N(6)-trimethyl-L-lysyl-[protein] + 3 S-adenosyl-L-homocysteine + 3 H(+)</text>
        <dbReference type="Rhea" id="RHEA:54192"/>
        <dbReference type="Rhea" id="RHEA-COMP:9752"/>
        <dbReference type="Rhea" id="RHEA-COMP:13826"/>
        <dbReference type="ChEBI" id="CHEBI:15378"/>
        <dbReference type="ChEBI" id="CHEBI:29969"/>
        <dbReference type="ChEBI" id="CHEBI:57856"/>
        <dbReference type="ChEBI" id="CHEBI:59789"/>
        <dbReference type="ChEBI" id="CHEBI:61961"/>
    </reaction>
</comment>
<comment type="subcellular location">
    <subcellularLocation>
        <location evidence="1">Cytoplasm</location>
    </subcellularLocation>
</comment>
<comment type="similarity">
    <text evidence="1">Belongs to the methyltransferase superfamily. PrmA family.</text>
</comment>
<protein>
    <recommendedName>
        <fullName evidence="1">Ribosomal protein L11 methyltransferase</fullName>
        <shortName evidence="1">L11 Mtase</shortName>
        <ecNumber evidence="1">2.1.1.-</ecNumber>
    </recommendedName>
</protein>
<organism>
    <name type="scientific">Brucella suis biovar 1 (strain 1330)</name>
    <dbReference type="NCBI Taxonomy" id="204722"/>
    <lineage>
        <taxon>Bacteria</taxon>
        <taxon>Pseudomonadati</taxon>
        <taxon>Pseudomonadota</taxon>
        <taxon>Alphaproteobacteria</taxon>
        <taxon>Hyphomicrobiales</taxon>
        <taxon>Brucellaceae</taxon>
        <taxon>Brucella/Ochrobactrum group</taxon>
        <taxon>Brucella</taxon>
    </lineage>
</organism>
<keyword id="KW-0963">Cytoplasm</keyword>
<keyword id="KW-0489">Methyltransferase</keyword>
<keyword id="KW-0949">S-adenosyl-L-methionine</keyword>
<keyword id="KW-0808">Transferase</keyword>
<proteinExistence type="inferred from homology"/>
<accession>Q8FZQ6</accession>
<accession>G0KBH7</accession>
<dbReference type="EC" id="2.1.1.-" evidence="1"/>
<dbReference type="EMBL" id="AE014291">
    <property type="protein sequence ID" value="AAN30330.1"/>
    <property type="molecule type" value="Genomic_DNA"/>
</dbReference>
<dbReference type="EMBL" id="CP002997">
    <property type="protein sequence ID" value="AEM18746.1"/>
    <property type="molecule type" value="Genomic_DNA"/>
</dbReference>
<dbReference type="PIR" id="AB3326">
    <property type="entry name" value="AB3326"/>
</dbReference>
<dbReference type="RefSeq" id="WP_002964525.1">
    <property type="nucleotide sequence ID" value="NZ_KN046804.1"/>
</dbReference>
<dbReference type="SMR" id="Q8FZQ6"/>
<dbReference type="KEGG" id="bms:BR1417"/>
<dbReference type="KEGG" id="bsi:BS1330_I1411"/>
<dbReference type="PATRIC" id="fig|204722.22.peg.379"/>
<dbReference type="HOGENOM" id="CLU_049382_3_0_5"/>
<dbReference type="PhylomeDB" id="Q8FZQ6"/>
<dbReference type="Proteomes" id="UP000007104">
    <property type="component" value="Chromosome I"/>
</dbReference>
<dbReference type="GO" id="GO:0005737">
    <property type="term" value="C:cytoplasm"/>
    <property type="evidence" value="ECO:0007669"/>
    <property type="project" value="UniProtKB-SubCell"/>
</dbReference>
<dbReference type="GO" id="GO:0016279">
    <property type="term" value="F:protein-lysine N-methyltransferase activity"/>
    <property type="evidence" value="ECO:0007669"/>
    <property type="project" value="RHEA"/>
</dbReference>
<dbReference type="GO" id="GO:0032259">
    <property type="term" value="P:methylation"/>
    <property type="evidence" value="ECO:0007669"/>
    <property type="project" value="UniProtKB-KW"/>
</dbReference>
<dbReference type="CDD" id="cd02440">
    <property type="entry name" value="AdoMet_MTases"/>
    <property type="match status" value="1"/>
</dbReference>
<dbReference type="Gene3D" id="3.40.50.150">
    <property type="entry name" value="Vaccinia Virus protein VP39"/>
    <property type="match status" value="1"/>
</dbReference>
<dbReference type="HAMAP" id="MF_00735">
    <property type="entry name" value="Methyltr_PrmA"/>
    <property type="match status" value="1"/>
</dbReference>
<dbReference type="InterPro" id="IPR050078">
    <property type="entry name" value="Ribosomal_L11_MeTrfase_PrmA"/>
</dbReference>
<dbReference type="InterPro" id="IPR004498">
    <property type="entry name" value="Ribosomal_PrmA_MeTrfase"/>
</dbReference>
<dbReference type="InterPro" id="IPR029063">
    <property type="entry name" value="SAM-dependent_MTases_sf"/>
</dbReference>
<dbReference type="NCBIfam" id="NF001784">
    <property type="entry name" value="PRK00517.2-1"/>
    <property type="match status" value="1"/>
</dbReference>
<dbReference type="PANTHER" id="PTHR43648">
    <property type="entry name" value="ELECTRON TRANSFER FLAVOPROTEIN BETA SUBUNIT LYSINE METHYLTRANSFERASE"/>
    <property type="match status" value="1"/>
</dbReference>
<dbReference type="PANTHER" id="PTHR43648:SF1">
    <property type="entry name" value="ELECTRON TRANSFER FLAVOPROTEIN BETA SUBUNIT LYSINE METHYLTRANSFERASE"/>
    <property type="match status" value="1"/>
</dbReference>
<dbReference type="Pfam" id="PF06325">
    <property type="entry name" value="PrmA"/>
    <property type="match status" value="1"/>
</dbReference>
<dbReference type="PIRSF" id="PIRSF000401">
    <property type="entry name" value="RPL11_MTase"/>
    <property type="match status" value="1"/>
</dbReference>
<dbReference type="SUPFAM" id="SSF53335">
    <property type="entry name" value="S-adenosyl-L-methionine-dependent methyltransferases"/>
    <property type="match status" value="1"/>
</dbReference>
<evidence type="ECO:0000255" key="1">
    <source>
        <dbReference type="HAMAP-Rule" id="MF_00735"/>
    </source>
</evidence>
<name>PRMA_BRUSU</name>
<gene>
    <name evidence="1" type="primary">prmA</name>
    <name type="ordered locus">BR1417</name>
    <name type="ordered locus">BS1330_I1411</name>
</gene>
<sequence>MAQSRLFFSADKAEAERTYNILEQAFEDDGFPIAITEIDEDRQIFEVSVYVEDDAEEVAARVDALVGPGLFDTEELPDIDWVTHSLEGLKPVRAGHFFVHGSHDRDKIEPGDIAIEIDAGLAFGTGHHGTTAGCLELIEETVETEHPTNALDLGTGSAVLAIAIARLAPIPILATDIDPIAVTVAAENAAKNGVAEHIVTATAEGFGHPIFRSYSPFDLIVANILANPLIELAPSIKEHLAPGGSIILSGILDSQHDAVLAAYQTQGLTHQKTLHREGWVAIHLK</sequence>